<proteinExistence type="inferred from homology"/>
<keyword id="KW-0030">Aminoacyl-tRNA synthetase</keyword>
<keyword id="KW-0067">ATP-binding</keyword>
<keyword id="KW-0963">Cytoplasm</keyword>
<keyword id="KW-0436">Ligase</keyword>
<keyword id="KW-0460">Magnesium</keyword>
<keyword id="KW-0479">Metal-binding</keyword>
<keyword id="KW-0547">Nucleotide-binding</keyword>
<keyword id="KW-0648">Protein biosynthesis</keyword>
<keyword id="KW-1185">Reference proteome</keyword>
<keyword id="KW-0694">RNA-binding</keyword>
<keyword id="KW-0820">tRNA-binding</keyword>
<name>SYFB_LATSS</name>
<accession>Q38VV4</accession>
<reference key="1">
    <citation type="journal article" date="2005" name="Nat. Biotechnol.">
        <title>The complete genome sequence of the meat-borne lactic acid bacterium Lactobacillus sakei 23K.</title>
        <authorList>
            <person name="Chaillou S."/>
            <person name="Champomier-Verges M.-C."/>
            <person name="Cornet M."/>
            <person name="Crutz-Le Coq A.-M."/>
            <person name="Dudez A.-M."/>
            <person name="Martin V."/>
            <person name="Beaufils S."/>
            <person name="Darbon-Rongere E."/>
            <person name="Bossy R."/>
            <person name="Loux V."/>
            <person name="Zagorec M."/>
        </authorList>
    </citation>
    <scope>NUCLEOTIDE SEQUENCE [LARGE SCALE GENOMIC DNA]</scope>
    <source>
        <strain>23K</strain>
    </source>
</reference>
<comment type="catalytic activity">
    <reaction evidence="1">
        <text>tRNA(Phe) + L-phenylalanine + ATP = L-phenylalanyl-tRNA(Phe) + AMP + diphosphate + H(+)</text>
        <dbReference type="Rhea" id="RHEA:19413"/>
        <dbReference type="Rhea" id="RHEA-COMP:9668"/>
        <dbReference type="Rhea" id="RHEA-COMP:9699"/>
        <dbReference type="ChEBI" id="CHEBI:15378"/>
        <dbReference type="ChEBI" id="CHEBI:30616"/>
        <dbReference type="ChEBI" id="CHEBI:33019"/>
        <dbReference type="ChEBI" id="CHEBI:58095"/>
        <dbReference type="ChEBI" id="CHEBI:78442"/>
        <dbReference type="ChEBI" id="CHEBI:78531"/>
        <dbReference type="ChEBI" id="CHEBI:456215"/>
        <dbReference type="EC" id="6.1.1.20"/>
    </reaction>
</comment>
<comment type="cofactor">
    <cofactor evidence="1">
        <name>Mg(2+)</name>
        <dbReference type="ChEBI" id="CHEBI:18420"/>
    </cofactor>
    <text evidence="1">Binds 2 magnesium ions per tetramer.</text>
</comment>
<comment type="subunit">
    <text evidence="1">Tetramer of two alpha and two beta subunits.</text>
</comment>
<comment type="subcellular location">
    <subcellularLocation>
        <location evidence="1">Cytoplasm</location>
    </subcellularLocation>
</comment>
<comment type="similarity">
    <text evidence="1">Belongs to the phenylalanyl-tRNA synthetase beta subunit family. Type 1 subfamily.</text>
</comment>
<evidence type="ECO:0000255" key="1">
    <source>
        <dbReference type="HAMAP-Rule" id="MF_00283"/>
    </source>
</evidence>
<sequence>MKVSYNWLKDYLDLTTAPEALAEKITRTGIEVADVAQMSAGLKKIVVGHVLSCEPHPDSDHLHVCEVDVGEEEPFQIVCGAPNVAAGQYVIVALPNSRIADNVKIKKGKMRGVVSMGMICGLQEIGFADSVVPKEYVDGIFVFPEAIAPGTDVYEALGMTDYIIDLDLTANRADALGIHGVAHEVAAIESLTPHFEDVAVSESDVQTKNQLSAQVADEQLAPTYHLRMLQNVTVQPSPLWLQTRLWNAGIRPINNLVDVTNYMMLTYGQPLHAFDADTLTGDHKQIEVRLAKTGEKLTTLDEAEHDLTNEDIVITDGNQPIALAGVMGGFNSEITANTKNVIIEAAIFAPTAVRKTAQRHNLRSDASSRFEKGVNVADVQVALDAAAAMMAELGAGQVTAGVVSPTNLAPQPKVIQFDSARVNRVLGTDMSVQTMINLLERLGFEVANNADQLTVTIPARRWDIEIQADVIEEIARLYGYDNLPSTLPTGDMTTGALTTEQKALRRTRHTLEGAGLTQAISYALTTEEKAGQFTLAAKQTATVLDWPMTQDHAYLRMNLVTGLLDDAAYNVARKQTDLALYEQGRVFLQHADQARPNEVEYVAGLMSGNRQVKSWQEAAAPVDFYTIKGIVDTLMASYNLQAAVAYQATDAYPEMHPGRTAAIYVGETFVGIVGQIHPKIAKATHLKETYIFELDLAKILELQRQTIIAKPAPKFPEVTRDIALQVPEAITNADLVNAIKEKGGRYLVSVSLFDVYAGSHIEAGEKSMAYTLTYLNEDATLTEEEVNAAFEKVVAHLVATFQAKVR</sequence>
<feature type="chain" id="PRO_0000232066" description="Phenylalanine--tRNA ligase beta subunit">
    <location>
        <begin position="1"/>
        <end position="806"/>
    </location>
</feature>
<feature type="domain" description="tRNA-binding" evidence="1">
    <location>
        <begin position="39"/>
        <end position="154"/>
    </location>
</feature>
<feature type="domain" description="B5" evidence="1">
    <location>
        <begin position="410"/>
        <end position="485"/>
    </location>
</feature>
<feature type="domain" description="FDX-ACB" evidence="1">
    <location>
        <begin position="713"/>
        <end position="806"/>
    </location>
</feature>
<feature type="binding site" evidence="1">
    <location>
        <position position="463"/>
    </location>
    <ligand>
        <name>Mg(2+)</name>
        <dbReference type="ChEBI" id="CHEBI:18420"/>
        <note>shared with alpha subunit</note>
    </ligand>
</feature>
<feature type="binding site" evidence="1">
    <location>
        <position position="469"/>
    </location>
    <ligand>
        <name>Mg(2+)</name>
        <dbReference type="ChEBI" id="CHEBI:18420"/>
        <note>shared with alpha subunit</note>
    </ligand>
</feature>
<feature type="binding site" evidence="1">
    <location>
        <position position="472"/>
    </location>
    <ligand>
        <name>Mg(2+)</name>
        <dbReference type="ChEBI" id="CHEBI:18420"/>
        <note>shared with alpha subunit</note>
    </ligand>
</feature>
<feature type="binding site" evidence="1">
    <location>
        <position position="473"/>
    </location>
    <ligand>
        <name>Mg(2+)</name>
        <dbReference type="ChEBI" id="CHEBI:18420"/>
        <note>shared with alpha subunit</note>
    </ligand>
</feature>
<protein>
    <recommendedName>
        <fullName evidence="1">Phenylalanine--tRNA ligase beta subunit</fullName>
        <ecNumber evidence="1">6.1.1.20</ecNumber>
    </recommendedName>
    <alternativeName>
        <fullName evidence="1">Phenylalanyl-tRNA synthetase beta subunit</fullName>
        <shortName evidence="1">PheRS</shortName>
    </alternativeName>
</protein>
<dbReference type="EC" id="6.1.1.20" evidence="1"/>
<dbReference type="EMBL" id="CR936503">
    <property type="protein sequence ID" value="CAI55679.1"/>
    <property type="molecule type" value="Genomic_DNA"/>
</dbReference>
<dbReference type="RefSeq" id="WP_011375070.1">
    <property type="nucleotide sequence ID" value="NC_007576.1"/>
</dbReference>
<dbReference type="SMR" id="Q38VV4"/>
<dbReference type="STRING" id="314315.LCA_1375"/>
<dbReference type="KEGG" id="lsa:LCA_1375"/>
<dbReference type="eggNOG" id="COG0072">
    <property type="taxonomic scope" value="Bacteria"/>
</dbReference>
<dbReference type="HOGENOM" id="CLU_016891_0_0_9"/>
<dbReference type="OrthoDB" id="9805455at2"/>
<dbReference type="Proteomes" id="UP000002707">
    <property type="component" value="Chromosome"/>
</dbReference>
<dbReference type="GO" id="GO:0009328">
    <property type="term" value="C:phenylalanine-tRNA ligase complex"/>
    <property type="evidence" value="ECO:0007669"/>
    <property type="project" value="TreeGrafter"/>
</dbReference>
<dbReference type="GO" id="GO:0005524">
    <property type="term" value="F:ATP binding"/>
    <property type="evidence" value="ECO:0007669"/>
    <property type="project" value="UniProtKB-UniRule"/>
</dbReference>
<dbReference type="GO" id="GO:0140096">
    <property type="term" value="F:catalytic activity, acting on a protein"/>
    <property type="evidence" value="ECO:0007669"/>
    <property type="project" value="UniProtKB-ARBA"/>
</dbReference>
<dbReference type="GO" id="GO:0000287">
    <property type="term" value="F:magnesium ion binding"/>
    <property type="evidence" value="ECO:0007669"/>
    <property type="project" value="UniProtKB-UniRule"/>
</dbReference>
<dbReference type="GO" id="GO:0004826">
    <property type="term" value="F:phenylalanine-tRNA ligase activity"/>
    <property type="evidence" value="ECO:0007669"/>
    <property type="project" value="UniProtKB-UniRule"/>
</dbReference>
<dbReference type="GO" id="GO:0016740">
    <property type="term" value="F:transferase activity"/>
    <property type="evidence" value="ECO:0007669"/>
    <property type="project" value="UniProtKB-ARBA"/>
</dbReference>
<dbReference type="GO" id="GO:0000049">
    <property type="term" value="F:tRNA binding"/>
    <property type="evidence" value="ECO:0007669"/>
    <property type="project" value="UniProtKB-KW"/>
</dbReference>
<dbReference type="GO" id="GO:0006432">
    <property type="term" value="P:phenylalanyl-tRNA aminoacylation"/>
    <property type="evidence" value="ECO:0007669"/>
    <property type="project" value="UniProtKB-UniRule"/>
</dbReference>
<dbReference type="CDD" id="cd00769">
    <property type="entry name" value="PheRS_beta_core"/>
    <property type="match status" value="1"/>
</dbReference>
<dbReference type="CDD" id="cd02796">
    <property type="entry name" value="tRNA_bind_bactPheRS"/>
    <property type="match status" value="1"/>
</dbReference>
<dbReference type="FunFam" id="2.40.50.140:FF:000045">
    <property type="entry name" value="Phenylalanine--tRNA ligase beta subunit"/>
    <property type="match status" value="1"/>
</dbReference>
<dbReference type="FunFam" id="3.30.56.10:FF:000002">
    <property type="entry name" value="Phenylalanine--tRNA ligase beta subunit"/>
    <property type="match status" value="1"/>
</dbReference>
<dbReference type="FunFam" id="3.30.70.380:FF:000001">
    <property type="entry name" value="Phenylalanine--tRNA ligase beta subunit"/>
    <property type="match status" value="1"/>
</dbReference>
<dbReference type="FunFam" id="3.30.930.10:FF:000022">
    <property type="entry name" value="Phenylalanine--tRNA ligase beta subunit"/>
    <property type="match status" value="1"/>
</dbReference>
<dbReference type="FunFam" id="3.50.40.10:FF:000001">
    <property type="entry name" value="Phenylalanine--tRNA ligase beta subunit"/>
    <property type="match status" value="1"/>
</dbReference>
<dbReference type="Gene3D" id="3.30.56.10">
    <property type="match status" value="2"/>
</dbReference>
<dbReference type="Gene3D" id="3.30.930.10">
    <property type="entry name" value="Bira Bifunctional Protein, Domain 2"/>
    <property type="match status" value="1"/>
</dbReference>
<dbReference type="Gene3D" id="3.30.70.380">
    <property type="entry name" value="Ferrodoxin-fold anticodon-binding domain"/>
    <property type="match status" value="1"/>
</dbReference>
<dbReference type="Gene3D" id="2.40.50.140">
    <property type="entry name" value="Nucleic acid-binding proteins"/>
    <property type="match status" value="1"/>
</dbReference>
<dbReference type="Gene3D" id="3.50.40.10">
    <property type="entry name" value="Phenylalanyl-trna Synthetase, Chain B, domain 3"/>
    <property type="match status" value="1"/>
</dbReference>
<dbReference type="HAMAP" id="MF_00283">
    <property type="entry name" value="Phe_tRNA_synth_beta1"/>
    <property type="match status" value="1"/>
</dbReference>
<dbReference type="InterPro" id="IPR045864">
    <property type="entry name" value="aa-tRNA-synth_II/BPL/LPL"/>
</dbReference>
<dbReference type="InterPro" id="IPR005146">
    <property type="entry name" value="B3/B4_tRNA-bd"/>
</dbReference>
<dbReference type="InterPro" id="IPR009061">
    <property type="entry name" value="DNA-bd_dom_put_sf"/>
</dbReference>
<dbReference type="InterPro" id="IPR005121">
    <property type="entry name" value="Fdx_antiC-bd"/>
</dbReference>
<dbReference type="InterPro" id="IPR036690">
    <property type="entry name" value="Fdx_antiC-bd_sf"/>
</dbReference>
<dbReference type="InterPro" id="IPR012340">
    <property type="entry name" value="NA-bd_OB-fold"/>
</dbReference>
<dbReference type="InterPro" id="IPR045060">
    <property type="entry name" value="Phe-tRNA-ligase_IIc_bsu"/>
</dbReference>
<dbReference type="InterPro" id="IPR004532">
    <property type="entry name" value="Phe-tRNA-ligase_IIc_bsu_bact"/>
</dbReference>
<dbReference type="InterPro" id="IPR020825">
    <property type="entry name" value="Phe-tRNA_synthase-like_B3/B4"/>
</dbReference>
<dbReference type="InterPro" id="IPR041616">
    <property type="entry name" value="PheRS_beta_core"/>
</dbReference>
<dbReference type="InterPro" id="IPR002547">
    <property type="entry name" value="tRNA-bd_dom"/>
</dbReference>
<dbReference type="InterPro" id="IPR033714">
    <property type="entry name" value="tRNA_bind_bactPheRS"/>
</dbReference>
<dbReference type="InterPro" id="IPR005147">
    <property type="entry name" value="tRNA_synthase_B5-dom"/>
</dbReference>
<dbReference type="NCBIfam" id="TIGR00472">
    <property type="entry name" value="pheT_bact"/>
    <property type="match status" value="1"/>
</dbReference>
<dbReference type="NCBIfam" id="NF045760">
    <property type="entry name" value="YtpR"/>
    <property type="match status" value="1"/>
</dbReference>
<dbReference type="PANTHER" id="PTHR10947:SF0">
    <property type="entry name" value="PHENYLALANINE--TRNA LIGASE BETA SUBUNIT"/>
    <property type="match status" value="1"/>
</dbReference>
<dbReference type="PANTHER" id="PTHR10947">
    <property type="entry name" value="PHENYLALANYL-TRNA SYNTHETASE BETA CHAIN AND LEUCINE-RICH REPEAT-CONTAINING PROTEIN 47"/>
    <property type="match status" value="1"/>
</dbReference>
<dbReference type="Pfam" id="PF03483">
    <property type="entry name" value="B3_4"/>
    <property type="match status" value="1"/>
</dbReference>
<dbReference type="Pfam" id="PF03484">
    <property type="entry name" value="B5"/>
    <property type="match status" value="1"/>
</dbReference>
<dbReference type="Pfam" id="PF03147">
    <property type="entry name" value="FDX-ACB"/>
    <property type="match status" value="1"/>
</dbReference>
<dbReference type="Pfam" id="PF01588">
    <property type="entry name" value="tRNA_bind"/>
    <property type="match status" value="1"/>
</dbReference>
<dbReference type="Pfam" id="PF17759">
    <property type="entry name" value="tRNA_synthFbeta"/>
    <property type="match status" value="1"/>
</dbReference>
<dbReference type="SMART" id="SM00873">
    <property type="entry name" value="B3_4"/>
    <property type="match status" value="1"/>
</dbReference>
<dbReference type="SMART" id="SM00874">
    <property type="entry name" value="B5"/>
    <property type="match status" value="1"/>
</dbReference>
<dbReference type="SMART" id="SM00896">
    <property type="entry name" value="FDX-ACB"/>
    <property type="match status" value="1"/>
</dbReference>
<dbReference type="SUPFAM" id="SSF54991">
    <property type="entry name" value="Anticodon-binding domain of PheRS"/>
    <property type="match status" value="1"/>
</dbReference>
<dbReference type="SUPFAM" id="SSF55681">
    <property type="entry name" value="Class II aaRS and biotin synthetases"/>
    <property type="match status" value="1"/>
</dbReference>
<dbReference type="SUPFAM" id="SSF50249">
    <property type="entry name" value="Nucleic acid-binding proteins"/>
    <property type="match status" value="1"/>
</dbReference>
<dbReference type="SUPFAM" id="SSF56037">
    <property type="entry name" value="PheT/TilS domain"/>
    <property type="match status" value="1"/>
</dbReference>
<dbReference type="SUPFAM" id="SSF46955">
    <property type="entry name" value="Putative DNA-binding domain"/>
    <property type="match status" value="1"/>
</dbReference>
<dbReference type="PROSITE" id="PS51483">
    <property type="entry name" value="B5"/>
    <property type="match status" value="1"/>
</dbReference>
<dbReference type="PROSITE" id="PS51447">
    <property type="entry name" value="FDX_ACB"/>
    <property type="match status" value="1"/>
</dbReference>
<dbReference type="PROSITE" id="PS50886">
    <property type="entry name" value="TRBD"/>
    <property type="match status" value="1"/>
</dbReference>
<gene>
    <name evidence="1" type="primary">pheT</name>
    <name type="ordered locus">LCA_1375</name>
</gene>
<organism>
    <name type="scientific">Latilactobacillus sakei subsp. sakei (strain 23K)</name>
    <name type="common">Lactobacillus sakei subsp. sakei</name>
    <dbReference type="NCBI Taxonomy" id="314315"/>
    <lineage>
        <taxon>Bacteria</taxon>
        <taxon>Bacillati</taxon>
        <taxon>Bacillota</taxon>
        <taxon>Bacilli</taxon>
        <taxon>Lactobacillales</taxon>
        <taxon>Lactobacillaceae</taxon>
        <taxon>Latilactobacillus</taxon>
    </lineage>
</organism>